<gene>
    <name type="ordered locus">MCAP_0867</name>
</gene>
<accession>P43043</accession>
<accession>Q2SR04</accession>
<proteinExistence type="predicted"/>
<evidence type="ECO:0000305" key="1"/>
<protein>
    <recommendedName>
        <fullName>Uncharacterized protein MCAP_0867</fullName>
    </recommendedName>
    <alternativeName>
        <fullName>ORF R4</fullName>
    </alternativeName>
</protein>
<reference key="1">
    <citation type="journal article" date="1993" name="Nucleic Acids Res.">
        <title>Mapping of replication initiation site in Mycoplasma capricolum genome by two-dimensional gel-electrophoretic analysis.</title>
        <authorList>
            <person name="Miyata M."/>
            <person name="Sano K."/>
            <person name="Okada R."/>
            <person name="Fukumura T."/>
        </authorList>
    </citation>
    <scope>NUCLEOTIDE SEQUENCE [GENOMIC DNA]</scope>
</reference>
<reference key="2">
    <citation type="submission" date="2005-09" db="EMBL/GenBank/DDBJ databases">
        <authorList>
            <person name="Glass J.I."/>
            <person name="Lartigue C."/>
            <person name="Pfannkoch C."/>
            <person name="Baden-Tillson H."/>
            <person name="Smith H.O."/>
            <person name="Venter J.C."/>
            <person name="Roske K."/>
            <person name="Wise K.S."/>
            <person name="Calcutt M.J."/>
            <person name="Nelson W.C."/>
            <person name="Nierman W.C."/>
        </authorList>
    </citation>
    <scope>NUCLEOTIDE SEQUENCE [LARGE SCALE GENOMIC DNA]</scope>
    <source>
        <strain>California kid / ATCC 27343 / NCTC 10154</strain>
    </source>
</reference>
<organism>
    <name type="scientific">Mycoplasma capricolum subsp. capricolum (strain California kid / ATCC 27343 / NCTC 10154)</name>
    <dbReference type="NCBI Taxonomy" id="340047"/>
    <lineage>
        <taxon>Bacteria</taxon>
        <taxon>Bacillati</taxon>
        <taxon>Mycoplasmatota</taxon>
        <taxon>Mollicutes</taxon>
        <taxon>Mycoplasmataceae</taxon>
        <taxon>Mycoplasma</taxon>
    </lineage>
</organism>
<name>Y867_MYCCT</name>
<sequence>MTKYLFSDFDNTLRNSKVKNSLRIDQKDLDFIKEFQKNNKLIVSTGRPYKQLKEHLLNEYNLMPDYFIVNTGAMICDNKGRILYKKTIDNKIKIQLLNFLKTIVNQIDVIVFATSENESFLFHKNWSKDVEKFFFGLEKLNKTLDYLYDKDLLCLKIECSQETWNKIEDFINKNNLEVNITFNSINNRLFNEIHAFKVSKGQAIKGLQEKLDISSDDIIVAGDDYNDISMFEMFYKNSYMCKHKHNENIRNKARYLIDNIWEIKY</sequence>
<dbReference type="EMBL" id="D14982">
    <property type="protein sequence ID" value="BAA03621.1"/>
    <property type="molecule type" value="Genomic_DNA"/>
</dbReference>
<dbReference type="EMBL" id="CP000123">
    <property type="protein sequence ID" value="ABC01109.1"/>
    <property type="molecule type" value="Genomic_DNA"/>
</dbReference>
<dbReference type="PIR" id="S42123">
    <property type="entry name" value="S42123"/>
</dbReference>
<dbReference type="RefSeq" id="WP_011387693.1">
    <property type="nucleotide sequence ID" value="NC_007633.1"/>
</dbReference>
<dbReference type="SMR" id="P43043"/>
<dbReference type="GeneID" id="23778180"/>
<dbReference type="KEGG" id="mcp:MCAP_0867"/>
<dbReference type="HOGENOM" id="CLU_044146_3_2_14"/>
<dbReference type="PhylomeDB" id="P43043"/>
<dbReference type="Proteomes" id="UP000001928">
    <property type="component" value="Chromosome"/>
</dbReference>
<dbReference type="GO" id="GO:0005829">
    <property type="term" value="C:cytosol"/>
    <property type="evidence" value="ECO:0007669"/>
    <property type="project" value="TreeGrafter"/>
</dbReference>
<dbReference type="GO" id="GO:0000287">
    <property type="term" value="F:magnesium ion binding"/>
    <property type="evidence" value="ECO:0007669"/>
    <property type="project" value="TreeGrafter"/>
</dbReference>
<dbReference type="GO" id="GO:0016791">
    <property type="term" value="F:phosphatase activity"/>
    <property type="evidence" value="ECO:0007669"/>
    <property type="project" value="UniProtKB-ARBA"/>
</dbReference>
<dbReference type="Gene3D" id="3.40.50.1000">
    <property type="entry name" value="HAD superfamily/HAD-like"/>
    <property type="match status" value="2"/>
</dbReference>
<dbReference type="InterPro" id="IPR000150">
    <property type="entry name" value="Cof"/>
</dbReference>
<dbReference type="InterPro" id="IPR036412">
    <property type="entry name" value="HAD-like_sf"/>
</dbReference>
<dbReference type="InterPro" id="IPR006379">
    <property type="entry name" value="HAD-SF_hydro_IIB"/>
</dbReference>
<dbReference type="InterPro" id="IPR023214">
    <property type="entry name" value="HAD_sf"/>
</dbReference>
<dbReference type="NCBIfam" id="TIGR00099">
    <property type="entry name" value="Cof-subfamily"/>
    <property type="match status" value="1"/>
</dbReference>
<dbReference type="NCBIfam" id="TIGR01484">
    <property type="entry name" value="HAD-SF-IIB"/>
    <property type="match status" value="1"/>
</dbReference>
<dbReference type="PANTHER" id="PTHR10000:SF8">
    <property type="entry name" value="HAD SUPERFAMILY HYDROLASE-LIKE, TYPE 3"/>
    <property type="match status" value="1"/>
</dbReference>
<dbReference type="PANTHER" id="PTHR10000">
    <property type="entry name" value="PHOSPHOSERINE PHOSPHATASE"/>
    <property type="match status" value="1"/>
</dbReference>
<dbReference type="Pfam" id="PF08282">
    <property type="entry name" value="Hydrolase_3"/>
    <property type="match status" value="1"/>
</dbReference>
<dbReference type="SUPFAM" id="SSF56784">
    <property type="entry name" value="HAD-like"/>
    <property type="match status" value="1"/>
</dbReference>
<feature type="chain" id="PRO_0000066469" description="Uncharacterized protein MCAP_0867">
    <location>
        <begin position="1"/>
        <end position="265"/>
    </location>
</feature>
<feature type="sequence conflict" description="In Ref. 1; BAA03621." evidence="1" ref="1">
    <original>I</original>
    <variation>V</variation>
    <location>
        <position position="260"/>
    </location>
</feature>